<keyword id="KW-0963">Cytoplasm</keyword>
<keyword id="KW-0479">Metal-binding</keyword>
<keyword id="KW-0520">NAD</keyword>
<keyword id="KW-0560">Oxidoreductase</keyword>
<keyword id="KW-0862">Zinc</keyword>
<sequence>MKALSKLKAEEGIWMTDVPQPELGHNDIMIKIRKTAICGTDVHIYNWDEWSQKTIPVPMVVGHEYVGEVVAIGQEVKGFNIGDRVSGEGHITCGHCRNCRGGRTHLCRNTVGVGVNRPGSFAEYLVIPAFNAFKIPDNISDELAAIFDPFGNAVHTALSFDLVGEDVLVSGAGPIGIMAAAVCKHVGARHVVIADVNEYRLDLARKMGVTRAVNVSKENLNDVMTELGMTEGFDVGLEMSGAPPAFRSLLNSMNHGGRIAMLGIPPSDMSIDWNQVIFKGLFIKGIYGREMFETWYKMAALIQSGLDLTPIITHRFPIDEFQQGFDAMRSGKSGKVVLSWD</sequence>
<gene>
    <name evidence="1" type="primary">tdh</name>
    <name type="ordered locus">YPDSF_3845</name>
</gene>
<protein>
    <recommendedName>
        <fullName evidence="1">L-threonine 3-dehydrogenase</fullName>
        <shortName evidence="1">TDH</shortName>
        <ecNumber evidence="1">1.1.1.103</ecNumber>
    </recommendedName>
</protein>
<accession>A4TSC6</accession>
<dbReference type="EC" id="1.1.1.103" evidence="1"/>
<dbReference type="EMBL" id="CP000668">
    <property type="protein sequence ID" value="ABP42188.1"/>
    <property type="molecule type" value="Genomic_DNA"/>
</dbReference>
<dbReference type="RefSeq" id="WP_002208981.1">
    <property type="nucleotide sequence ID" value="NZ_CP009715.1"/>
</dbReference>
<dbReference type="SMR" id="A4TSC6"/>
<dbReference type="GeneID" id="57974530"/>
<dbReference type="KEGG" id="ypp:YPDSF_3845"/>
<dbReference type="PATRIC" id="fig|386656.14.peg.673"/>
<dbReference type="UniPathway" id="UPA00046">
    <property type="reaction ID" value="UER00505"/>
</dbReference>
<dbReference type="GO" id="GO:0005737">
    <property type="term" value="C:cytoplasm"/>
    <property type="evidence" value="ECO:0007669"/>
    <property type="project" value="UniProtKB-SubCell"/>
</dbReference>
<dbReference type="GO" id="GO:0008743">
    <property type="term" value="F:L-threonine 3-dehydrogenase activity"/>
    <property type="evidence" value="ECO:0007669"/>
    <property type="project" value="UniProtKB-UniRule"/>
</dbReference>
<dbReference type="GO" id="GO:0008270">
    <property type="term" value="F:zinc ion binding"/>
    <property type="evidence" value="ECO:0007669"/>
    <property type="project" value="UniProtKB-UniRule"/>
</dbReference>
<dbReference type="GO" id="GO:0019518">
    <property type="term" value="P:L-threonine catabolic process to glycine"/>
    <property type="evidence" value="ECO:0007669"/>
    <property type="project" value="UniProtKB-UniPathway"/>
</dbReference>
<dbReference type="FunFam" id="3.40.50.720:FF:000059">
    <property type="entry name" value="L-threonine 3-dehydrogenase"/>
    <property type="match status" value="1"/>
</dbReference>
<dbReference type="Gene3D" id="3.90.180.10">
    <property type="entry name" value="Medium-chain alcohol dehydrogenases, catalytic domain"/>
    <property type="match status" value="1"/>
</dbReference>
<dbReference type="Gene3D" id="3.40.50.720">
    <property type="entry name" value="NAD(P)-binding Rossmann-like Domain"/>
    <property type="match status" value="1"/>
</dbReference>
<dbReference type="HAMAP" id="MF_00627">
    <property type="entry name" value="Thr_dehydrog"/>
    <property type="match status" value="1"/>
</dbReference>
<dbReference type="InterPro" id="IPR013149">
    <property type="entry name" value="ADH-like_C"/>
</dbReference>
<dbReference type="InterPro" id="IPR013154">
    <property type="entry name" value="ADH-like_N"/>
</dbReference>
<dbReference type="InterPro" id="IPR002328">
    <property type="entry name" value="ADH_Zn_CS"/>
</dbReference>
<dbReference type="InterPro" id="IPR011032">
    <property type="entry name" value="GroES-like_sf"/>
</dbReference>
<dbReference type="InterPro" id="IPR004627">
    <property type="entry name" value="L-Threonine_3-DHase"/>
</dbReference>
<dbReference type="InterPro" id="IPR036291">
    <property type="entry name" value="NAD(P)-bd_dom_sf"/>
</dbReference>
<dbReference type="InterPro" id="IPR020843">
    <property type="entry name" value="PKS_ER"/>
</dbReference>
<dbReference type="InterPro" id="IPR050129">
    <property type="entry name" value="Zn_alcohol_dh"/>
</dbReference>
<dbReference type="NCBIfam" id="NF003808">
    <property type="entry name" value="PRK05396.1"/>
    <property type="match status" value="1"/>
</dbReference>
<dbReference type="NCBIfam" id="TIGR00692">
    <property type="entry name" value="tdh"/>
    <property type="match status" value="1"/>
</dbReference>
<dbReference type="PANTHER" id="PTHR43401">
    <property type="entry name" value="L-THREONINE 3-DEHYDROGENASE"/>
    <property type="match status" value="1"/>
</dbReference>
<dbReference type="PANTHER" id="PTHR43401:SF2">
    <property type="entry name" value="L-THREONINE 3-DEHYDROGENASE"/>
    <property type="match status" value="1"/>
</dbReference>
<dbReference type="Pfam" id="PF08240">
    <property type="entry name" value="ADH_N"/>
    <property type="match status" value="1"/>
</dbReference>
<dbReference type="Pfam" id="PF00107">
    <property type="entry name" value="ADH_zinc_N"/>
    <property type="match status" value="1"/>
</dbReference>
<dbReference type="SMART" id="SM00829">
    <property type="entry name" value="PKS_ER"/>
    <property type="match status" value="1"/>
</dbReference>
<dbReference type="SUPFAM" id="SSF50129">
    <property type="entry name" value="GroES-like"/>
    <property type="match status" value="1"/>
</dbReference>
<dbReference type="SUPFAM" id="SSF51735">
    <property type="entry name" value="NAD(P)-binding Rossmann-fold domains"/>
    <property type="match status" value="1"/>
</dbReference>
<dbReference type="PROSITE" id="PS00059">
    <property type="entry name" value="ADH_ZINC"/>
    <property type="match status" value="1"/>
</dbReference>
<evidence type="ECO:0000255" key="1">
    <source>
        <dbReference type="HAMAP-Rule" id="MF_00627"/>
    </source>
</evidence>
<name>TDH_YERPP</name>
<organism>
    <name type="scientific">Yersinia pestis (strain Pestoides F)</name>
    <dbReference type="NCBI Taxonomy" id="386656"/>
    <lineage>
        <taxon>Bacteria</taxon>
        <taxon>Pseudomonadati</taxon>
        <taxon>Pseudomonadota</taxon>
        <taxon>Gammaproteobacteria</taxon>
        <taxon>Enterobacterales</taxon>
        <taxon>Yersiniaceae</taxon>
        <taxon>Yersinia</taxon>
    </lineage>
</organism>
<feature type="chain" id="PRO_1000051673" description="L-threonine 3-dehydrogenase">
    <location>
        <begin position="1"/>
        <end position="341"/>
    </location>
</feature>
<feature type="active site" description="Charge relay system" evidence="1">
    <location>
        <position position="40"/>
    </location>
</feature>
<feature type="active site" description="Charge relay system" evidence="1">
    <location>
        <position position="43"/>
    </location>
</feature>
<feature type="binding site" evidence="1">
    <location>
        <position position="38"/>
    </location>
    <ligand>
        <name>Zn(2+)</name>
        <dbReference type="ChEBI" id="CHEBI:29105"/>
        <label>1</label>
        <note>catalytic</note>
    </ligand>
</feature>
<feature type="binding site" evidence="1">
    <location>
        <position position="63"/>
    </location>
    <ligand>
        <name>Zn(2+)</name>
        <dbReference type="ChEBI" id="CHEBI:29105"/>
        <label>1</label>
        <note>catalytic</note>
    </ligand>
</feature>
<feature type="binding site" evidence="1">
    <location>
        <position position="64"/>
    </location>
    <ligand>
        <name>Zn(2+)</name>
        <dbReference type="ChEBI" id="CHEBI:29105"/>
        <label>1</label>
        <note>catalytic</note>
    </ligand>
</feature>
<feature type="binding site" evidence="1">
    <location>
        <position position="93"/>
    </location>
    <ligand>
        <name>Zn(2+)</name>
        <dbReference type="ChEBI" id="CHEBI:29105"/>
        <label>2</label>
    </ligand>
</feature>
<feature type="binding site" evidence="1">
    <location>
        <position position="96"/>
    </location>
    <ligand>
        <name>Zn(2+)</name>
        <dbReference type="ChEBI" id="CHEBI:29105"/>
        <label>2</label>
    </ligand>
</feature>
<feature type="binding site" evidence="1">
    <location>
        <position position="99"/>
    </location>
    <ligand>
        <name>Zn(2+)</name>
        <dbReference type="ChEBI" id="CHEBI:29105"/>
        <label>2</label>
    </ligand>
</feature>
<feature type="binding site" evidence="1">
    <location>
        <position position="107"/>
    </location>
    <ligand>
        <name>Zn(2+)</name>
        <dbReference type="ChEBI" id="CHEBI:29105"/>
        <label>2</label>
    </ligand>
</feature>
<feature type="binding site" evidence="1">
    <location>
        <position position="175"/>
    </location>
    <ligand>
        <name>NAD(+)</name>
        <dbReference type="ChEBI" id="CHEBI:57540"/>
    </ligand>
</feature>
<feature type="binding site" evidence="1">
    <location>
        <position position="195"/>
    </location>
    <ligand>
        <name>NAD(+)</name>
        <dbReference type="ChEBI" id="CHEBI:57540"/>
    </ligand>
</feature>
<feature type="binding site" evidence="1">
    <location>
        <position position="200"/>
    </location>
    <ligand>
        <name>NAD(+)</name>
        <dbReference type="ChEBI" id="CHEBI:57540"/>
    </ligand>
</feature>
<feature type="binding site" evidence="1">
    <location>
        <begin position="262"/>
        <end position="264"/>
    </location>
    <ligand>
        <name>NAD(+)</name>
        <dbReference type="ChEBI" id="CHEBI:57540"/>
    </ligand>
</feature>
<feature type="binding site" evidence="1">
    <location>
        <begin position="286"/>
        <end position="287"/>
    </location>
    <ligand>
        <name>NAD(+)</name>
        <dbReference type="ChEBI" id="CHEBI:57540"/>
    </ligand>
</feature>
<feature type="site" description="Important for catalytic activity for the proton relay mechanism but does not participate directly in the coordination of zinc atom" evidence="1">
    <location>
        <position position="148"/>
    </location>
</feature>
<reference key="1">
    <citation type="submission" date="2007-02" db="EMBL/GenBank/DDBJ databases">
        <title>Complete sequence of chromosome of Yersinia pestis Pestoides F.</title>
        <authorList>
            <consortium name="US DOE Joint Genome Institute"/>
            <person name="Copeland A."/>
            <person name="Lucas S."/>
            <person name="Lapidus A."/>
            <person name="Barry K."/>
            <person name="Detter J.C."/>
            <person name="Glavina del Rio T."/>
            <person name="Hammon N."/>
            <person name="Israni S."/>
            <person name="Dalin E."/>
            <person name="Tice H."/>
            <person name="Pitluck S."/>
            <person name="Di Bartolo G."/>
            <person name="Chain P."/>
            <person name="Malfatti S."/>
            <person name="Shin M."/>
            <person name="Vergez L."/>
            <person name="Schmutz J."/>
            <person name="Larimer F."/>
            <person name="Land M."/>
            <person name="Hauser L."/>
            <person name="Worsham P."/>
            <person name="Chu M."/>
            <person name="Bearden S."/>
            <person name="Garcia E."/>
            <person name="Richardson P."/>
        </authorList>
    </citation>
    <scope>NUCLEOTIDE SEQUENCE [LARGE SCALE GENOMIC DNA]</scope>
    <source>
        <strain>Pestoides F</strain>
    </source>
</reference>
<comment type="function">
    <text evidence="1">Catalyzes the NAD(+)-dependent oxidation of L-threonine to 2-amino-3-ketobutyrate.</text>
</comment>
<comment type="catalytic activity">
    <reaction evidence="1">
        <text>L-threonine + NAD(+) = (2S)-2-amino-3-oxobutanoate + NADH + H(+)</text>
        <dbReference type="Rhea" id="RHEA:13161"/>
        <dbReference type="ChEBI" id="CHEBI:15378"/>
        <dbReference type="ChEBI" id="CHEBI:57540"/>
        <dbReference type="ChEBI" id="CHEBI:57926"/>
        <dbReference type="ChEBI" id="CHEBI:57945"/>
        <dbReference type="ChEBI" id="CHEBI:78948"/>
        <dbReference type="EC" id="1.1.1.103"/>
    </reaction>
</comment>
<comment type="cofactor">
    <cofactor evidence="1">
        <name>Zn(2+)</name>
        <dbReference type="ChEBI" id="CHEBI:29105"/>
    </cofactor>
    <text evidence="1">Binds 2 Zn(2+) ions per subunit.</text>
</comment>
<comment type="pathway">
    <text evidence="1">Amino-acid degradation; L-threonine degradation via oxydo-reductase pathway; glycine from L-threonine: step 1/2.</text>
</comment>
<comment type="subunit">
    <text evidence="1">Homotetramer.</text>
</comment>
<comment type="subcellular location">
    <subcellularLocation>
        <location evidence="1">Cytoplasm</location>
    </subcellularLocation>
</comment>
<comment type="similarity">
    <text evidence="1">Belongs to the zinc-containing alcohol dehydrogenase family.</text>
</comment>
<proteinExistence type="inferred from homology"/>